<name>MBR1_YEAS7</name>
<gene>
    <name type="primary">MBR1</name>
    <name type="ORF">SCY_3284</name>
</gene>
<reference key="1">
    <citation type="journal article" date="2007" name="Proc. Natl. Acad. Sci. U.S.A.">
        <title>Genome sequencing and comparative analysis of Saccharomyces cerevisiae strain YJM789.</title>
        <authorList>
            <person name="Wei W."/>
            <person name="McCusker J.H."/>
            <person name="Hyman R.W."/>
            <person name="Jones T."/>
            <person name="Ning Y."/>
            <person name="Cao Z."/>
            <person name="Gu Z."/>
            <person name="Bruno D."/>
            <person name="Miranda M."/>
            <person name="Nguyen M."/>
            <person name="Wilhelmy J."/>
            <person name="Komp C."/>
            <person name="Tamse R."/>
            <person name="Wang X."/>
            <person name="Jia P."/>
            <person name="Luedi P."/>
            <person name="Oefner P.J."/>
            <person name="David L."/>
            <person name="Dietrich F.S."/>
            <person name="Li Y."/>
            <person name="Davis R.W."/>
            <person name="Steinmetz L.M."/>
        </authorList>
    </citation>
    <scope>NUCLEOTIDE SEQUENCE [LARGE SCALE GENOMIC DNA]</scope>
    <source>
        <strain>YJM789</strain>
    </source>
</reference>
<protein>
    <recommendedName>
        <fullName>Mitochondrial biogenesis regulation protein 1</fullName>
    </recommendedName>
</protein>
<evidence type="ECO:0000250" key="1"/>
<evidence type="ECO:0000250" key="2">
    <source>
        <dbReference type="UniProtKB" id="P23493"/>
    </source>
</evidence>
<evidence type="ECO:0000256" key="3">
    <source>
        <dbReference type="SAM" id="MobiDB-lite"/>
    </source>
</evidence>
<evidence type="ECO:0000305" key="4"/>
<sequence length="339" mass="36885">MRMEKTTDKSLSAGDMNDEYSRGPIDDIDCLNFFERAVQDPCCEACDTEDADEELRAKLSSFNFQPDSSPCNAKCQQTLNPLCKIDEALSAESELAPSRNGSVSEANSDTNSIASTVHDPVDSKYGGMPSLRKAKTTSYFASSSSNNTTMRNPLKKCNTNINGLLVNGRSSSSSRQSIPELFSGACTKKKNNVLLKSETPNSEFSSNSLQHCNSRSFSLPRSRSRSSAIAIPTHLYGLEKYVSPGLDTLTADPEESIERFSNNRPREISSCCPNDTGDTSSSLSHSNTSSSLNFPLGTNTNQFHQPRQPVQQQQSSKPNFGAGRKKSFIEMSLASSFAG</sequence>
<accession>A6ZZM4</accession>
<dbReference type="EMBL" id="AAFW02000151">
    <property type="protein sequence ID" value="EDN60072.1"/>
    <property type="molecule type" value="Genomic_DNA"/>
</dbReference>
<dbReference type="HOGENOM" id="CLU_778649_0_0_1"/>
<dbReference type="OrthoDB" id="33491at4893"/>
<dbReference type="Proteomes" id="UP000007060">
    <property type="component" value="Unassembled WGS sequence"/>
</dbReference>
<dbReference type="GO" id="GO:0005739">
    <property type="term" value="C:mitochondrion"/>
    <property type="evidence" value="ECO:0007669"/>
    <property type="project" value="UniProtKB-SubCell"/>
</dbReference>
<dbReference type="InterPro" id="IPR031443">
    <property type="entry name" value="Mbr1"/>
</dbReference>
<dbReference type="Pfam" id="PF17058">
    <property type="entry name" value="MBR1"/>
    <property type="match status" value="1"/>
</dbReference>
<keyword id="KW-0496">Mitochondrion</keyword>
<keyword id="KW-0597">Phosphoprotein</keyword>
<keyword id="KW-0346">Stress response</keyword>
<feature type="chain" id="PRO_0000408864" description="Mitochondrial biogenesis regulation protein 1">
    <location>
        <begin position="1"/>
        <end position="339"/>
    </location>
</feature>
<feature type="region of interest" description="Disordered" evidence="3">
    <location>
        <begin position="1"/>
        <end position="20"/>
    </location>
</feature>
<feature type="region of interest" description="Disordered" evidence="3">
    <location>
        <begin position="94"/>
        <end position="130"/>
    </location>
</feature>
<feature type="region of interest" description="Disordered" evidence="3">
    <location>
        <begin position="198"/>
        <end position="224"/>
    </location>
</feature>
<feature type="region of interest" description="Disordered" evidence="3">
    <location>
        <begin position="258"/>
        <end position="325"/>
    </location>
</feature>
<feature type="compositionally biased region" description="Polar residues" evidence="3">
    <location>
        <begin position="99"/>
        <end position="115"/>
    </location>
</feature>
<feature type="compositionally biased region" description="Polar residues" evidence="3">
    <location>
        <begin position="198"/>
        <end position="213"/>
    </location>
</feature>
<feature type="compositionally biased region" description="Low complexity" evidence="3">
    <location>
        <begin position="214"/>
        <end position="224"/>
    </location>
</feature>
<feature type="compositionally biased region" description="Low complexity" evidence="3">
    <location>
        <begin position="279"/>
        <end position="293"/>
    </location>
</feature>
<feature type="compositionally biased region" description="Low complexity" evidence="3">
    <location>
        <begin position="302"/>
        <end position="314"/>
    </location>
</feature>
<feature type="modified residue" description="Phosphothreonine" evidence="2">
    <location>
        <position position="159"/>
    </location>
</feature>
<feature type="modified residue" description="Phosphoserine" evidence="2">
    <location>
        <position position="177"/>
    </location>
</feature>
<feature type="modified residue" description="Phosphoserine" evidence="2">
    <location>
        <position position="224"/>
    </location>
</feature>
<feature type="modified residue" description="Phosphoserine" evidence="2">
    <location>
        <position position="227"/>
    </location>
</feature>
<organism>
    <name type="scientific">Saccharomyces cerevisiae (strain YJM789)</name>
    <name type="common">Baker's yeast</name>
    <dbReference type="NCBI Taxonomy" id="307796"/>
    <lineage>
        <taxon>Eukaryota</taxon>
        <taxon>Fungi</taxon>
        <taxon>Dikarya</taxon>
        <taxon>Ascomycota</taxon>
        <taxon>Saccharomycotina</taxon>
        <taxon>Saccharomycetes</taxon>
        <taxon>Saccharomycetales</taxon>
        <taxon>Saccharomycetaceae</taxon>
        <taxon>Saccharomyces</taxon>
    </lineage>
</organism>
<comment type="function">
    <text evidence="1">Participates in mitochondrial biogenesis and stress response.</text>
</comment>
<comment type="subcellular location">
    <subcellularLocation>
        <location evidence="4">Mitochondrion</location>
    </subcellularLocation>
</comment>
<comment type="similarity">
    <text evidence="4">Belongs to the ISF1/MBR1 family.</text>
</comment>
<proteinExistence type="inferred from homology"/>